<accession>Q8D3Z2</accession>
<protein>
    <recommendedName>
        <fullName evidence="2">Purine nucleoside phosphorylase DeoD-type 2</fullName>
        <shortName evidence="2">PNP 2</shortName>
        <ecNumber evidence="2">2.4.2.1</ecNumber>
    </recommendedName>
</protein>
<comment type="function">
    <text evidence="2">Catalyzes the reversible phosphorolytic breakdown of the N-glycosidic bond in the beta-(deoxy)ribonucleoside molecules, with the formation of the corresponding free purine bases and pentose-1-phosphate.</text>
</comment>
<comment type="catalytic activity">
    <reaction evidence="2">
        <text>a purine D-ribonucleoside + phosphate = a purine nucleobase + alpha-D-ribose 1-phosphate</text>
        <dbReference type="Rhea" id="RHEA:19805"/>
        <dbReference type="ChEBI" id="CHEBI:26386"/>
        <dbReference type="ChEBI" id="CHEBI:43474"/>
        <dbReference type="ChEBI" id="CHEBI:57720"/>
        <dbReference type="ChEBI" id="CHEBI:142355"/>
        <dbReference type="EC" id="2.4.2.1"/>
    </reaction>
</comment>
<comment type="catalytic activity">
    <reaction evidence="2">
        <text>a purine 2'-deoxy-D-ribonucleoside + phosphate = a purine nucleobase + 2-deoxy-alpha-D-ribose 1-phosphate</text>
        <dbReference type="Rhea" id="RHEA:36431"/>
        <dbReference type="ChEBI" id="CHEBI:26386"/>
        <dbReference type="ChEBI" id="CHEBI:43474"/>
        <dbReference type="ChEBI" id="CHEBI:57259"/>
        <dbReference type="ChEBI" id="CHEBI:142361"/>
        <dbReference type="EC" id="2.4.2.1"/>
    </reaction>
</comment>
<comment type="subunit">
    <text evidence="2">Homohexamer; trimer of homodimers.</text>
</comment>
<comment type="similarity">
    <text evidence="2">Belongs to the PNP/UDP phosphorylase family.</text>
</comment>
<organism>
    <name type="scientific">Vibrio vulnificus (strain CMCP6)</name>
    <dbReference type="NCBI Taxonomy" id="216895"/>
    <lineage>
        <taxon>Bacteria</taxon>
        <taxon>Pseudomonadati</taxon>
        <taxon>Pseudomonadota</taxon>
        <taxon>Gammaproteobacteria</taxon>
        <taxon>Vibrionales</taxon>
        <taxon>Vibrionaceae</taxon>
        <taxon>Vibrio</taxon>
    </lineage>
</organism>
<keyword id="KW-0328">Glycosyltransferase</keyword>
<keyword id="KW-0808">Transferase</keyword>
<gene>
    <name evidence="2" type="primary">deoD2</name>
    <name type="ordered locus">VV2_1540</name>
</gene>
<dbReference type="EC" id="2.4.2.1" evidence="2"/>
<dbReference type="EMBL" id="AE016796">
    <property type="protein sequence ID" value="AAO08404.1"/>
    <property type="molecule type" value="Genomic_DNA"/>
</dbReference>
<dbReference type="SMR" id="Q8D3Z2"/>
<dbReference type="KEGG" id="vvu:VV2_1540"/>
<dbReference type="HOGENOM" id="CLU_068457_2_0_6"/>
<dbReference type="Proteomes" id="UP000002275">
    <property type="component" value="Chromosome 2"/>
</dbReference>
<dbReference type="GO" id="GO:0005829">
    <property type="term" value="C:cytosol"/>
    <property type="evidence" value="ECO:0007669"/>
    <property type="project" value="TreeGrafter"/>
</dbReference>
<dbReference type="GO" id="GO:0004731">
    <property type="term" value="F:purine-nucleoside phosphorylase activity"/>
    <property type="evidence" value="ECO:0007669"/>
    <property type="project" value="UniProtKB-UniRule"/>
</dbReference>
<dbReference type="GO" id="GO:0006152">
    <property type="term" value="P:purine nucleoside catabolic process"/>
    <property type="evidence" value="ECO:0007669"/>
    <property type="project" value="TreeGrafter"/>
</dbReference>
<dbReference type="CDD" id="cd09006">
    <property type="entry name" value="PNP_EcPNPI-like"/>
    <property type="match status" value="1"/>
</dbReference>
<dbReference type="Gene3D" id="3.40.50.1580">
    <property type="entry name" value="Nucleoside phosphorylase domain"/>
    <property type="match status" value="1"/>
</dbReference>
<dbReference type="HAMAP" id="MF_01627">
    <property type="entry name" value="Pur_nucleosid_phosp"/>
    <property type="match status" value="1"/>
</dbReference>
<dbReference type="InterPro" id="IPR004402">
    <property type="entry name" value="DeoD-type"/>
</dbReference>
<dbReference type="InterPro" id="IPR000845">
    <property type="entry name" value="Nucleoside_phosphorylase_d"/>
</dbReference>
<dbReference type="InterPro" id="IPR035994">
    <property type="entry name" value="Nucleoside_phosphorylase_sf"/>
</dbReference>
<dbReference type="NCBIfam" id="TIGR00107">
    <property type="entry name" value="deoD"/>
    <property type="match status" value="1"/>
</dbReference>
<dbReference type="NCBIfam" id="NF004489">
    <property type="entry name" value="PRK05819.1"/>
    <property type="match status" value="1"/>
</dbReference>
<dbReference type="NCBIfam" id="NF009914">
    <property type="entry name" value="PRK13374.1"/>
    <property type="match status" value="1"/>
</dbReference>
<dbReference type="PANTHER" id="PTHR43691:SF11">
    <property type="entry name" value="FI09636P-RELATED"/>
    <property type="match status" value="1"/>
</dbReference>
<dbReference type="PANTHER" id="PTHR43691">
    <property type="entry name" value="URIDINE PHOSPHORYLASE"/>
    <property type="match status" value="1"/>
</dbReference>
<dbReference type="Pfam" id="PF01048">
    <property type="entry name" value="PNP_UDP_1"/>
    <property type="match status" value="1"/>
</dbReference>
<dbReference type="SUPFAM" id="SSF53167">
    <property type="entry name" value="Purine and uridine phosphorylases"/>
    <property type="match status" value="1"/>
</dbReference>
<feature type="chain" id="PRO_0000063177" description="Purine nucleoside phosphorylase DeoD-type 2">
    <location>
        <begin position="1"/>
        <end position="236"/>
    </location>
</feature>
<feature type="active site" description="Proton donor" evidence="2">
    <location>
        <position position="205"/>
    </location>
</feature>
<feature type="binding site" evidence="1">
    <location>
        <position position="5"/>
    </location>
    <ligand>
        <name>a purine D-ribonucleoside</name>
        <dbReference type="ChEBI" id="CHEBI:142355"/>
        <note>ligand shared between dimeric partners</note>
    </ligand>
</feature>
<feature type="binding site" description="in other chain" evidence="1">
    <location>
        <position position="21"/>
    </location>
    <ligand>
        <name>phosphate</name>
        <dbReference type="ChEBI" id="CHEBI:43474"/>
        <note>ligand shared between dimeric partners</note>
    </ligand>
</feature>
<feature type="binding site" description="in other chain" evidence="1">
    <location>
        <position position="25"/>
    </location>
    <ligand>
        <name>phosphate</name>
        <dbReference type="ChEBI" id="CHEBI:43474"/>
        <note>ligand shared between dimeric partners</note>
    </ligand>
</feature>
<feature type="binding site" evidence="1">
    <location>
        <position position="44"/>
    </location>
    <ligand>
        <name>phosphate</name>
        <dbReference type="ChEBI" id="CHEBI:43474"/>
        <note>ligand shared between dimeric partners</note>
    </ligand>
</feature>
<feature type="binding site" description="in other chain" evidence="1">
    <location>
        <begin position="88"/>
        <end position="91"/>
    </location>
    <ligand>
        <name>phosphate</name>
        <dbReference type="ChEBI" id="CHEBI:43474"/>
        <note>ligand shared between dimeric partners</note>
    </ligand>
</feature>
<feature type="binding site" description="in other chain" evidence="1">
    <location>
        <begin position="180"/>
        <end position="182"/>
    </location>
    <ligand>
        <name>a purine D-ribonucleoside</name>
        <dbReference type="ChEBI" id="CHEBI:142355"/>
        <note>ligand shared between dimeric partners</note>
    </ligand>
</feature>
<feature type="binding site" description="in other chain" evidence="1">
    <location>
        <begin position="204"/>
        <end position="205"/>
    </location>
    <ligand>
        <name>a purine D-ribonucleoside</name>
        <dbReference type="ChEBI" id="CHEBI:142355"/>
        <note>ligand shared between dimeric partners</note>
    </ligand>
</feature>
<feature type="site" description="Important for catalytic activity" evidence="2">
    <location>
        <position position="218"/>
    </location>
</feature>
<evidence type="ECO:0000250" key="1">
    <source>
        <dbReference type="UniProtKB" id="P50389"/>
    </source>
</evidence>
<evidence type="ECO:0000255" key="2">
    <source>
        <dbReference type="HAMAP-Rule" id="MF_01627"/>
    </source>
</evidence>
<proteinExistence type="inferred from homology"/>
<name>DEOD2_VIBVU</name>
<reference key="1">
    <citation type="submission" date="2002-12" db="EMBL/GenBank/DDBJ databases">
        <title>Complete genome sequence of Vibrio vulnificus CMCP6.</title>
        <authorList>
            <person name="Rhee J.H."/>
            <person name="Kim S.Y."/>
            <person name="Chung S.S."/>
            <person name="Kim J.J."/>
            <person name="Moon Y.H."/>
            <person name="Jeong H."/>
            <person name="Choy H.E."/>
        </authorList>
    </citation>
    <scope>NUCLEOTIDE SEQUENCE [LARGE SCALE GENOMIC DNA]</scope>
    <source>
        <strain>CMCP6</strain>
    </source>
</reference>
<sequence>MATPHINAQPGDFAETVLMPGDPLRAKYIAETFLEDVKQVCDVRNMFGFTGTYKGKKVSVMGHGMGIPSACIYVHELIAEYGVKNVIRVGSCGAVRDDVNLMDVVIGMGASTDSKVNRIRFNDHDFAALADYGLLEEAVKQARAQNVPVKVGNVFSADLFYTPEADIFEKMEKLGILGVDMEAAGIYGVAADLKAKALTILTVSDHIIRGEKLSSEDRQKSFNDMMKVALETAINL</sequence>